<reference key="1">
    <citation type="journal article" date="2004" name="Nature">
        <title>Genome sequence of the Brown Norway rat yields insights into mammalian evolution.</title>
        <authorList>
            <person name="Gibbs R.A."/>
            <person name="Weinstock G.M."/>
            <person name="Metzker M.L."/>
            <person name="Muzny D.M."/>
            <person name="Sodergren E.J."/>
            <person name="Scherer S."/>
            <person name="Scott G."/>
            <person name="Steffen D."/>
            <person name="Worley K.C."/>
            <person name="Burch P.E."/>
            <person name="Okwuonu G."/>
            <person name="Hines S."/>
            <person name="Lewis L."/>
            <person name="Deramo C."/>
            <person name="Delgado O."/>
            <person name="Dugan-Rocha S."/>
            <person name="Miner G."/>
            <person name="Morgan M."/>
            <person name="Hawes A."/>
            <person name="Gill R."/>
            <person name="Holt R.A."/>
            <person name="Adams M.D."/>
            <person name="Amanatides P.G."/>
            <person name="Baden-Tillson H."/>
            <person name="Barnstead M."/>
            <person name="Chin S."/>
            <person name="Evans C.A."/>
            <person name="Ferriera S."/>
            <person name="Fosler C."/>
            <person name="Glodek A."/>
            <person name="Gu Z."/>
            <person name="Jennings D."/>
            <person name="Kraft C.L."/>
            <person name="Nguyen T."/>
            <person name="Pfannkoch C.M."/>
            <person name="Sitter C."/>
            <person name="Sutton G.G."/>
            <person name="Venter J.C."/>
            <person name="Woodage T."/>
            <person name="Smith D."/>
            <person name="Lee H.-M."/>
            <person name="Gustafson E."/>
            <person name="Cahill P."/>
            <person name="Kana A."/>
            <person name="Doucette-Stamm L."/>
            <person name="Weinstock K."/>
            <person name="Fechtel K."/>
            <person name="Weiss R.B."/>
            <person name="Dunn D.M."/>
            <person name="Green E.D."/>
            <person name="Blakesley R.W."/>
            <person name="Bouffard G.G."/>
            <person name="De Jong P.J."/>
            <person name="Osoegawa K."/>
            <person name="Zhu B."/>
            <person name="Marra M."/>
            <person name="Schein J."/>
            <person name="Bosdet I."/>
            <person name="Fjell C."/>
            <person name="Jones S."/>
            <person name="Krzywinski M."/>
            <person name="Mathewson C."/>
            <person name="Siddiqui A."/>
            <person name="Wye N."/>
            <person name="McPherson J."/>
            <person name="Zhao S."/>
            <person name="Fraser C.M."/>
            <person name="Shetty J."/>
            <person name="Shatsman S."/>
            <person name="Geer K."/>
            <person name="Chen Y."/>
            <person name="Abramzon S."/>
            <person name="Nierman W.C."/>
            <person name="Havlak P.H."/>
            <person name="Chen R."/>
            <person name="Durbin K.J."/>
            <person name="Egan A."/>
            <person name="Ren Y."/>
            <person name="Song X.-Z."/>
            <person name="Li B."/>
            <person name="Liu Y."/>
            <person name="Qin X."/>
            <person name="Cawley S."/>
            <person name="Cooney A.J."/>
            <person name="D'Souza L.M."/>
            <person name="Martin K."/>
            <person name="Wu J.Q."/>
            <person name="Gonzalez-Garay M.L."/>
            <person name="Jackson A.R."/>
            <person name="Kalafus K.J."/>
            <person name="McLeod M.P."/>
            <person name="Milosavljevic A."/>
            <person name="Virk D."/>
            <person name="Volkov A."/>
            <person name="Wheeler D.A."/>
            <person name="Zhang Z."/>
            <person name="Bailey J.A."/>
            <person name="Eichler E.E."/>
            <person name="Tuzun E."/>
            <person name="Birney E."/>
            <person name="Mongin E."/>
            <person name="Ureta-Vidal A."/>
            <person name="Woodwark C."/>
            <person name="Zdobnov E."/>
            <person name="Bork P."/>
            <person name="Suyama M."/>
            <person name="Torrents D."/>
            <person name="Alexandersson M."/>
            <person name="Trask B.J."/>
            <person name="Young J.M."/>
            <person name="Huang H."/>
            <person name="Wang H."/>
            <person name="Xing H."/>
            <person name="Daniels S."/>
            <person name="Gietzen D."/>
            <person name="Schmidt J."/>
            <person name="Stevens K."/>
            <person name="Vitt U."/>
            <person name="Wingrove J."/>
            <person name="Camara F."/>
            <person name="Mar Alba M."/>
            <person name="Abril J.F."/>
            <person name="Guigo R."/>
            <person name="Smit A."/>
            <person name="Dubchak I."/>
            <person name="Rubin E.M."/>
            <person name="Couronne O."/>
            <person name="Poliakov A."/>
            <person name="Huebner N."/>
            <person name="Ganten D."/>
            <person name="Goesele C."/>
            <person name="Hummel O."/>
            <person name="Kreitler T."/>
            <person name="Lee Y.-A."/>
            <person name="Monti J."/>
            <person name="Schulz H."/>
            <person name="Zimdahl H."/>
            <person name="Himmelbauer H."/>
            <person name="Lehrach H."/>
            <person name="Jacob H.J."/>
            <person name="Bromberg S."/>
            <person name="Gullings-Handley J."/>
            <person name="Jensen-Seaman M.I."/>
            <person name="Kwitek A.E."/>
            <person name="Lazar J."/>
            <person name="Pasko D."/>
            <person name="Tonellato P.J."/>
            <person name="Twigger S."/>
            <person name="Ponting C.P."/>
            <person name="Duarte J.M."/>
            <person name="Rice S."/>
            <person name="Goodstadt L."/>
            <person name="Beatson S.A."/>
            <person name="Emes R.D."/>
            <person name="Winter E.E."/>
            <person name="Webber C."/>
            <person name="Brandt P."/>
            <person name="Nyakatura G."/>
            <person name="Adetobi M."/>
            <person name="Chiaromonte F."/>
            <person name="Elnitski L."/>
            <person name="Eswara P."/>
            <person name="Hardison R.C."/>
            <person name="Hou M."/>
            <person name="Kolbe D."/>
            <person name="Makova K."/>
            <person name="Miller W."/>
            <person name="Nekrutenko A."/>
            <person name="Riemer C."/>
            <person name="Schwartz S."/>
            <person name="Taylor J."/>
            <person name="Yang S."/>
            <person name="Zhang Y."/>
            <person name="Lindpaintner K."/>
            <person name="Andrews T.D."/>
            <person name="Caccamo M."/>
            <person name="Clamp M."/>
            <person name="Clarke L."/>
            <person name="Curwen V."/>
            <person name="Durbin R.M."/>
            <person name="Eyras E."/>
            <person name="Searle S.M."/>
            <person name="Cooper G.M."/>
            <person name="Batzoglou S."/>
            <person name="Brudno M."/>
            <person name="Sidow A."/>
            <person name="Stone E.A."/>
            <person name="Payseur B.A."/>
            <person name="Bourque G."/>
            <person name="Lopez-Otin C."/>
            <person name="Puente X.S."/>
            <person name="Chakrabarti K."/>
            <person name="Chatterji S."/>
            <person name="Dewey C."/>
            <person name="Pachter L."/>
            <person name="Bray N."/>
            <person name="Yap V.B."/>
            <person name="Caspi A."/>
            <person name="Tesler G."/>
            <person name="Pevzner P.A."/>
            <person name="Haussler D."/>
            <person name="Roskin K.M."/>
            <person name="Baertsch R."/>
            <person name="Clawson H."/>
            <person name="Furey T.S."/>
            <person name="Hinrichs A.S."/>
            <person name="Karolchik D."/>
            <person name="Kent W.J."/>
            <person name="Rosenbloom K.R."/>
            <person name="Trumbower H."/>
            <person name="Weirauch M."/>
            <person name="Cooper D.N."/>
            <person name="Stenson P.D."/>
            <person name="Ma B."/>
            <person name="Brent M."/>
            <person name="Arumugam M."/>
            <person name="Shteynberg D."/>
            <person name="Copley R.R."/>
            <person name="Taylor M.S."/>
            <person name="Riethman H."/>
            <person name="Mudunuri U."/>
            <person name="Peterson J."/>
            <person name="Guyer M."/>
            <person name="Felsenfeld A."/>
            <person name="Old S."/>
            <person name="Mockrin S."/>
            <person name="Collins F.S."/>
        </authorList>
    </citation>
    <scope>NUCLEOTIDE SEQUENCE [LARGE SCALE GENOMIC DNA]</scope>
    <source>
        <strain>Brown Norway</strain>
    </source>
</reference>
<reference key="2">
    <citation type="journal article" date="2012" name="Nat. Commun.">
        <title>Quantitative maps of protein phosphorylation sites across 14 different rat organs and tissues.</title>
        <authorList>
            <person name="Lundby A."/>
            <person name="Secher A."/>
            <person name="Lage K."/>
            <person name="Nordsborg N.B."/>
            <person name="Dmytriyev A."/>
            <person name="Lundby C."/>
            <person name="Olsen J.V."/>
        </authorList>
    </citation>
    <scope>IDENTIFICATION BY MASS SPECTROMETRY [LARGE SCALE ANALYSIS]</scope>
</reference>
<reference key="3">
    <citation type="journal article" date="2022" name="Brain">
        <title>Early lysosome defects precede neurodegeneration with amyloid-beta and tau aggregation in NHE6-null rat brain.</title>
        <authorList>
            <person name="Lee Y."/>
            <person name="Miller M.R."/>
            <person name="Fernandez M.A."/>
            <person name="Berg E.L."/>
            <person name="Prada A.M."/>
            <person name="Ouyang Q."/>
            <person name="Schmidt M."/>
            <person name="Silverman J.L."/>
            <person name="Young-Pearse T.L."/>
            <person name="Morrow E.M."/>
        </authorList>
    </citation>
    <scope>DISRUPTION PHENOTYPE</scope>
</reference>
<gene>
    <name evidence="7" type="primary">Slc9a6</name>
</gene>
<proteinExistence type="evidence at protein level"/>
<protein>
    <recommendedName>
        <fullName>Sodium/hydrogen exchanger 6</fullName>
    </recommendedName>
    <alternativeName>
        <fullName>Na(+)/H(+) exchanger 6</fullName>
        <shortName>NHE-6</shortName>
    </alternativeName>
    <alternativeName>
        <fullName>Sodium/hydrogen exchanger</fullName>
    </alternativeName>
    <alternativeName>
        <fullName>Solute carrier family 9 member 6</fullName>
    </alternativeName>
</protein>
<sequence length="721" mass="79894">MTSPKPWARSAGSCQTQRAVRTRKKECREEGESDTEKGPAASSASAQCSFPKRVSFFGWAGALDSSGGTTRAMDEEIVSEKQAEESHRQDSANLLIFILLLTLTILTIWLFKHRRARFLHETGLAMIYGLLVGLVLRYGIHVPSDVNNVTLSCEVQSSPTTLLVNVSGKFYEYTLKGEISSHELNNVQDNEMLRKVTFDPEVFFNILLPPIIFYAGYSLKRRHFFRNLGSILAYAFLGTAISCFVIGSIMYGCVTLMKVTGQLAGDFYFTDCLLFGAIVSATDPVTVLAIFHELQVDVELYALLFGESVLNDAVAIVLSSSIVAYQPAGDNSHTFDVTAMFKSIGIFLGIFSGSFAMGAATGVVTCHVTKFTKLREFQLLETGLFFLMSWSTFLLAEAWGFTGVVAVLFCGITQAHYTYNNLSTESQHRTKQLFELLNFLAENFIFSYMGLTLFTFQNHVFNPTFVVGAFIAIFLGRAANIYPLSLLLNLGRRSKIGSNFQHMMMFAGLRGAMAFALAIRDTATYARQMMFSTTLLIVFFTVWVFGGGTTAMLSCLHIRVGVDSDQEHLGVPDNERRTTKAESAWLFRMWYNFDHNYLKPLLTHSGPPLTTTLPACCGPIARCLTSPQAYENQEQLKDDDSDLILNDGDISLTYGDSTVNTESATASAPRRFMGTSTEDALDRELTFGDHELVIRGTRLVLPMDDSEPALNSLDDTRHSPA</sequence>
<keyword id="KW-0050">Antiport</keyword>
<keyword id="KW-1003">Cell membrane</keyword>
<keyword id="KW-0967">Endosome</keyword>
<keyword id="KW-0325">Glycoprotein</keyword>
<keyword id="KW-0406">Ion transport</keyword>
<keyword id="KW-1017">Isopeptide bond</keyword>
<keyword id="KW-0472">Membrane</keyword>
<keyword id="KW-1185">Reference proteome</keyword>
<keyword id="KW-0915">Sodium</keyword>
<keyword id="KW-0739">Sodium transport</keyword>
<keyword id="KW-0812">Transmembrane</keyword>
<keyword id="KW-1133">Transmembrane helix</keyword>
<keyword id="KW-0813">Transport</keyword>
<keyword id="KW-0832">Ubl conjugation</keyword>
<feature type="chain" id="PRO_0000457380" description="Sodium/hydrogen exchanger 6">
    <location>
        <begin position="1"/>
        <end position="721"/>
    </location>
</feature>
<feature type="transmembrane region" description="Helical; Name=1" evidence="3">
    <location>
        <begin position="91"/>
        <end position="111"/>
    </location>
</feature>
<feature type="transmembrane region" description="Helical; Name=2" evidence="3">
    <location>
        <begin position="123"/>
        <end position="143"/>
    </location>
</feature>
<feature type="transmembrane region" description="Helical; Name=3" evidence="3">
    <location>
        <begin position="196"/>
        <end position="216"/>
    </location>
</feature>
<feature type="transmembrane region" description="Helical; Name=4" evidence="3">
    <location>
        <begin position="231"/>
        <end position="251"/>
    </location>
</feature>
<feature type="transmembrane region" description="Helical; Name=5" evidence="3">
    <location>
        <begin position="272"/>
        <end position="292"/>
    </location>
</feature>
<feature type="transmembrane region" description="Helical; Name=6" evidence="3">
    <location>
        <begin position="298"/>
        <end position="318"/>
    </location>
</feature>
<feature type="transmembrane region" description="Helical; Name=7" evidence="3">
    <location>
        <begin position="344"/>
        <end position="364"/>
    </location>
</feature>
<feature type="transmembrane region" description="Helical; Name=8" evidence="3">
    <location>
        <begin position="388"/>
        <end position="412"/>
    </location>
</feature>
<feature type="transmembrane region" description="Helical; Name=9" evidence="3">
    <location>
        <begin position="434"/>
        <end position="454"/>
    </location>
</feature>
<feature type="transmembrane region" description="Helical; Name=10" evidence="3">
    <location>
        <begin position="456"/>
        <end position="476"/>
    </location>
</feature>
<feature type="transmembrane region" description="Helical; Name=11" evidence="3">
    <location>
        <begin position="499"/>
        <end position="519"/>
    </location>
</feature>
<feature type="transmembrane region" description="Helical; Name=12" evidence="3">
    <location>
        <begin position="535"/>
        <end position="555"/>
    </location>
</feature>
<feature type="region of interest" description="Disordered" evidence="4">
    <location>
        <begin position="1"/>
        <end position="44"/>
    </location>
</feature>
<feature type="compositionally biased region" description="Basic and acidic residues" evidence="4">
    <location>
        <begin position="26"/>
        <end position="37"/>
    </location>
</feature>
<organism>
    <name type="scientific">Rattus norvegicus</name>
    <name type="common">Rat</name>
    <dbReference type="NCBI Taxonomy" id="10116"/>
    <lineage>
        <taxon>Eukaryota</taxon>
        <taxon>Metazoa</taxon>
        <taxon>Chordata</taxon>
        <taxon>Craniata</taxon>
        <taxon>Vertebrata</taxon>
        <taxon>Euteleostomi</taxon>
        <taxon>Mammalia</taxon>
        <taxon>Eutheria</taxon>
        <taxon>Euarchontoglires</taxon>
        <taxon>Glires</taxon>
        <taxon>Rodentia</taxon>
        <taxon>Myomorpha</taxon>
        <taxon>Muroidea</taxon>
        <taxon>Muridae</taxon>
        <taxon>Murinae</taxon>
        <taxon>Rattus</taxon>
    </lineage>
</organism>
<comment type="function">
    <text evidence="1 2">Endosomal Na(+), K(+)/H(+) antiporter. Mediates the electroneutral exchange of endosomal luminal H(+) for a cytosolic Na(+) or K(+). By facilitating proton efflux, SLC9A6 counteracts the acidity generated by vacuolar (V)-ATPase, thereby limiting luminal acidification. Responsible for alkalizing and maintaining the endosomal pH, and consequently in, e.g., endosome maturation and trafficking of recycling endosomal cargo (By similarity). Plays a critical role during neurodevelopment by regulating synaptic development and plasticity (By similarity). Implicated in the maintenance of cell polarity in a manner that is dependent on its ability to modulate intravesicular pH (By similarity). Regulates intracelular pH in some specialized cells, osteoclasts and stereocilia where this transporter localizes to the plasma membrane (By similarity).</text>
</comment>
<comment type="catalytic activity">
    <reaction evidence="2">
        <text>Na(+)(in) + H(+)(out) = Na(+)(out) + H(+)(in)</text>
        <dbReference type="Rhea" id="RHEA:29419"/>
        <dbReference type="ChEBI" id="CHEBI:15378"/>
        <dbReference type="ChEBI" id="CHEBI:29101"/>
    </reaction>
</comment>
<comment type="catalytic activity">
    <reaction evidence="1">
        <text>K(+)(in) + H(+)(out) = K(+)(out) + H(+)(in)</text>
        <dbReference type="Rhea" id="RHEA:29467"/>
        <dbReference type="ChEBI" id="CHEBI:15378"/>
        <dbReference type="ChEBI" id="CHEBI:29103"/>
    </reaction>
</comment>
<comment type="subunit">
    <text evidence="2">Homodimer. Interacts with RACK1; regulates the distribution of SLC9A6 between endosomes and the plasma membrane.</text>
</comment>
<comment type="subcellular location">
    <subcellularLocation>
        <location evidence="2">Endosome membrane</location>
        <topology evidence="3">Multi-pass membrane protein</topology>
    </subcellularLocation>
    <subcellularLocation>
        <location evidence="2">Recycling endosome membrane</location>
        <topology evidence="3">Multi-pass membrane protein</topology>
    </subcellularLocation>
    <subcellularLocation>
        <location evidence="2">Early endosome membrane</location>
        <topology evidence="2">Multi-pass membrane protein</topology>
    </subcellularLocation>
    <subcellularLocation>
        <location evidence="1">Late endosome membrane</location>
        <topology evidence="3">Multi-pass membrane protein</topology>
    </subcellularLocation>
    <subcellularLocation>
        <location evidence="2">Cell membrane</location>
        <topology evidence="3">Multi-pass membrane protein</topology>
    </subcellularLocation>
    <text evidence="1 2">Present predominantly in the recycling compartments including early and recycling endosomes, but undergoes plasma membrane localization during vesicular recycling, which is enhanced upon certain stimuli, such as hypoxia (By similarity). Has a major plasmalemmal distribution in a few specialized cells, such as in vestibular hair bundles and osteoblasts (By similarity).</text>
</comment>
<comment type="PTM">
    <text evidence="2">Ubiquitinated (in vitro).</text>
</comment>
<comment type="PTM">
    <text evidence="2">Glycosylated.</text>
</comment>
<comment type="disruption phenotype">
    <text evidence="5">Mutant mice generated by CRISPR-Cas9-mediated gene editing display an early neurodegeneration of the cerebellum and a more protracted timewise degeneration of structures within the cerebrum. In both the cerebellum and cerebrum, lysosome deficiency is an early pathogenic event, preceding autophagic dysfunction. In aged rat SLC9A6-null brain show deposition of amyloid-beta and tau.</text>
</comment>
<comment type="similarity">
    <text evidence="6">Belongs to the monovalent cation:proton antiporter 1 (CPA1) transporter (TC 2.A.36) family.</text>
</comment>
<evidence type="ECO:0000250" key="1">
    <source>
        <dbReference type="UniProtKB" id="A1L3P4"/>
    </source>
</evidence>
<evidence type="ECO:0000250" key="2">
    <source>
        <dbReference type="UniProtKB" id="Q92581"/>
    </source>
</evidence>
<evidence type="ECO:0000255" key="3"/>
<evidence type="ECO:0000256" key="4">
    <source>
        <dbReference type="SAM" id="MobiDB-lite"/>
    </source>
</evidence>
<evidence type="ECO:0000269" key="5">
    <source>
    </source>
</evidence>
<evidence type="ECO:0000305" key="6"/>
<evidence type="ECO:0000312" key="7">
    <source>
        <dbReference type="RGD" id="1563582"/>
    </source>
</evidence>
<name>SL9A6_RAT</name>
<dbReference type="EMBL" id="AC048362">
    <property type="status" value="NOT_ANNOTATED_CDS"/>
    <property type="molecule type" value="Genomic_DNA"/>
</dbReference>
<dbReference type="SMR" id="D3ZJ86"/>
<dbReference type="FunCoup" id="D3ZJ86">
    <property type="interactions" value="2159"/>
</dbReference>
<dbReference type="STRING" id="10116.ENSRNOP00000060014"/>
<dbReference type="iPTMnet" id="D3ZJ86"/>
<dbReference type="PhosphoSitePlus" id="D3ZJ86"/>
<dbReference type="SwissPalm" id="D3ZJ86"/>
<dbReference type="jPOST" id="D3ZJ86"/>
<dbReference type="PaxDb" id="10116-ENSRNOP00000060014"/>
<dbReference type="PeptideAtlas" id="D3ZJ86"/>
<dbReference type="PRIDE" id="D3ZJ86"/>
<dbReference type="Ensembl" id="ENSRNOT00000066809.4">
    <property type="protein sequence ID" value="ENSRNOP00000060014.3"/>
    <property type="gene ID" value="ENSRNOG00000000879.8"/>
</dbReference>
<dbReference type="AGR" id="RGD:1563582"/>
<dbReference type="RGD" id="1563582">
    <property type="gene designation" value="Slc9a6"/>
</dbReference>
<dbReference type="VEuPathDB" id="HostDB:ENSRNOG00000000879"/>
<dbReference type="eggNOG" id="KOG1965">
    <property type="taxonomic scope" value="Eukaryota"/>
</dbReference>
<dbReference type="GeneTree" id="ENSGT00940000153460"/>
<dbReference type="HOGENOM" id="CLU_005912_7_0_1"/>
<dbReference type="InParanoid" id="D3ZJ86"/>
<dbReference type="OMA" id="FTYVRRF"/>
<dbReference type="OrthoDB" id="196264at2759"/>
<dbReference type="Reactome" id="R-RNO-425986">
    <property type="pathway name" value="Sodium/Proton exchangers"/>
</dbReference>
<dbReference type="PRO" id="PR:D3ZJ86"/>
<dbReference type="Proteomes" id="UP000002494">
    <property type="component" value="Chromosome X"/>
</dbReference>
<dbReference type="Bgee" id="ENSRNOG00000000879">
    <property type="expression patterns" value="Expressed in Ammon's horn and 20 other cell types or tissues"/>
</dbReference>
<dbReference type="GO" id="GO:0043679">
    <property type="term" value="C:axon terminus"/>
    <property type="evidence" value="ECO:0000266"/>
    <property type="project" value="RGD"/>
</dbReference>
<dbReference type="GO" id="GO:0044308">
    <property type="term" value="C:axonal spine"/>
    <property type="evidence" value="ECO:0000266"/>
    <property type="project" value="RGD"/>
</dbReference>
<dbReference type="GO" id="GO:0031410">
    <property type="term" value="C:cytoplasmic vesicle"/>
    <property type="evidence" value="ECO:0000266"/>
    <property type="project" value="RGD"/>
</dbReference>
<dbReference type="GO" id="GO:0030425">
    <property type="term" value="C:dendrite"/>
    <property type="evidence" value="ECO:0000266"/>
    <property type="project" value="RGD"/>
</dbReference>
<dbReference type="GO" id="GO:0005769">
    <property type="term" value="C:early endosome"/>
    <property type="evidence" value="ECO:0000266"/>
    <property type="project" value="RGD"/>
</dbReference>
<dbReference type="GO" id="GO:0031901">
    <property type="term" value="C:early endosome membrane"/>
    <property type="evidence" value="ECO:0000250"/>
    <property type="project" value="UniProtKB"/>
</dbReference>
<dbReference type="GO" id="GO:0005789">
    <property type="term" value="C:endoplasmic reticulum membrane"/>
    <property type="evidence" value="ECO:0000266"/>
    <property type="project" value="RGD"/>
</dbReference>
<dbReference type="GO" id="GO:0005768">
    <property type="term" value="C:endosome"/>
    <property type="evidence" value="ECO:0000266"/>
    <property type="project" value="RGD"/>
</dbReference>
<dbReference type="GO" id="GO:0098978">
    <property type="term" value="C:glutamatergic synapse"/>
    <property type="evidence" value="ECO:0000266"/>
    <property type="project" value="RGD"/>
</dbReference>
<dbReference type="GO" id="GO:0005770">
    <property type="term" value="C:late endosome"/>
    <property type="evidence" value="ECO:0000266"/>
    <property type="project" value="RGD"/>
</dbReference>
<dbReference type="GO" id="GO:0031902">
    <property type="term" value="C:late endosome membrane"/>
    <property type="evidence" value="ECO:0007669"/>
    <property type="project" value="UniProtKB-SubCell"/>
</dbReference>
<dbReference type="GO" id="GO:0005886">
    <property type="term" value="C:plasma membrane"/>
    <property type="evidence" value="ECO:0000250"/>
    <property type="project" value="UniProtKB"/>
</dbReference>
<dbReference type="GO" id="GO:0098793">
    <property type="term" value="C:presynapse"/>
    <property type="evidence" value="ECO:0000314"/>
    <property type="project" value="SynGO"/>
</dbReference>
<dbReference type="GO" id="GO:0055037">
    <property type="term" value="C:recycling endosome"/>
    <property type="evidence" value="ECO:0000266"/>
    <property type="project" value="RGD"/>
</dbReference>
<dbReference type="GO" id="GO:0055038">
    <property type="term" value="C:recycling endosome membrane"/>
    <property type="evidence" value="ECO:0000250"/>
    <property type="project" value="UniProtKB"/>
</dbReference>
<dbReference type="GO" id="GO:0098685">
    <property type="term" value="C:Schaffer collateral - CA1 synapse"/>
    <property type="evidence" value="ECO:0000266"/>
    <property type="project" value="RGD"/>
</dbReference>
<dbReference type="GO" id="GO:0045202">
    <property type="term" value="C:synapse"/>
    <property type="evidence" value="ECO:0000266"/>
    <property type="project" value="RGD"/>
</dbReference>
<dbReference type="GO" id="GO:0042802">
    <property type="term" value="F:identical protein binding"/>
    <property type="evidence" value="ECO:0000266"/>
    <property type="project" value="RGD"/>
</dbReference>
<dbReference type="GO" id="GO:0015386">
    <property type="term" value="F:potassium:proton antiporter activity"/>
    <property type="evidence" value="ECO:0000266"/>
    <property type="project" value="RGD"/>
</dbReference>
<dbReference type="GO" id="GO:0015385">
    <property type="term" value="F:sodium:proton antiporter activity"/>
    <property type="evidence" value="ECO:0000266"/>
    <property type="project" value="RGD"/>
</dbReference>
<dbReference type="GO" id="GO:0048675">
    <property type="term" value="P:axon extension"/>
    <property type="evidence" value="ECO:0000266"/>
    <property type="project" value="RGD"/>
</dbReference>
<dbReference type="GO" id="GO:0031547">
    <property type="term" value="P:brain-derived neurotrophic factor receptor signaling pathway"/>
    <property type="evidence" value="ECO:0000266"/>
    <property type="project" value="RGD"/>
</dbReference>
<dbReference type="GO" id="GO:0097484">
    <property type="term" value="P:dendrite extension"/>
    <property type="evidence" value="ECO:0000266"/>
    <property type="project" value="RGD"/>
</dbReference>
<dbReference type="GO" id="GO:0060996">
    <property type="term" value="P:dendritic spine development"/>
    <property type="evidence" value="ECO:0000266"/>
    <property type="project" value="RGD"/>
</dbReference>
<dbReference type="GO" id="GO:0030010">
    <property type="term" value="P:establishment of cell polarity"/>
    <property type="evidence" value="ECO:0000250"/>
    <property type="project" value="UniProtKB"/>
</dbReference>
<dbReference type="GO" id="GO:0061900">
    <property type="term" value="P:glial cell activation"/>
    <property type="evidence" value="ECO:0000315"/>
    <property type="project" value="RGD"/>
</dbReference>
<dbReference type="GO" id="GO:0048812">
    <property type="term" value="P:neuron projection morphogenesis"/>
    <property type="evidence" value="ECO:0000266"/>
    <property type="project" value="RGD"/>
</dbReference>
<dbReference type="GO" id="GO:0071805">
    <property type="term" value="P:potassium ion transmembrane transport"/>
    <property type="evidence" value="ECO:0000318"/>
    <property type="project" value="GO_Central"/>
</dbReference>
<dbReference type="GO" id="GO:1902600">
    <property type="term" value="P:proton transmembrane transport"/>
    <property type="evidence" value="ECO:0000266"/>
    <property type="project" value="RGD"/>
</dbReference>
<dbReference type="GO" id="GO:0051453">
    <property type="term" value="P:regulation of intracellular pH"/>
    <property type="evidence" value="ECO:0000266"/>
    <property type="project" value="RGD"/>
</dbReference>
<dbReference type="GO" id="GO:0051386">
    <property type="term" value="P:regulation of neurotrophin TRK receptor signaling pathway"/>
    <property type="evidence" value="ECO:0000266"/>
    <property type="project" value="RGD"/>
</dbReference>
<dbReference type="GO" id="GO:0099072">
    <property type="term" value="P:regulation of postsynaptic membrane neurotransmitter receptor levels"/>
    <property type="evidence" value="ECO:0000266"/>
    <property type="project" value="RGD"/>
</dbReference>
<dbReference type="GO" id="GO:1901546">
    <property type="term" value="P:regulation of synaptic vesicle lumen acidification"/>
    <property type="evidence" value="ECO:0000314"/>
    <property type="project" value="SynGO"/>
</dbReference>
<dbReference type="GO" id="GO:0098719">
    <property type="term" value="P:sodium ion import across plasma membrane"/>
    <property type="evidence" value="ECO:0000318"/>
    <property type="project" value="GO_Central"/>
</dbReference>
<dbReference type="GO" id="GO:0050808">
    <property type="term" value="P:synapse organization"/>
    <property type="evidence" value="ECO:0000266"/>
    <property type="project" value="RGD"/>
</dbReference>
<dbReference type="Gene3D" id="6.10.140.1330">
    <property type="match status" value="1"/>
</dbReference>
<dbReference type="InterPro" id="IPR018422">
    <property type="entry name" value="Cation/H_exchanger_CPA1"/>
</dbReference>
<dbReference type="InterPro" id="IPR006153">
    <property type="entry name" value="Cation/H_exchanger_TM"/>
</dbReference>
<dbReference type="InterPro" id="IPR004709">
    <property type="entry name" value="NaH_exchanger"/>
</dbReference>
<dbReference type="InterPro" id="IPR002090">
    <property type="entry name" value="NHE-6/7/9"/>
</dbReference>
<dbReference type="NCBIfam" id="TIGR00840">
    <property type="entry name" value="b_cpa1"/>
    <property type="match status" value="1"/>
</dbReference>
<dbReference type="PANTHER" id="PTHR10110">
    <property type="entry name" value="SODIUM/HYDROGEN EXCHANGER"/>
    <property type="match status" value="1"/>
</dbReference>
<dbReference type="PANTHER" id="PTHR10110:SF94">
    <property type="entry name" value="SODIUM_HYDROGEN EXCHANGER 6"/>
    <property type="match status" value="1"/>
</dbReference>
<dbReference type="Pfam" id="PF00999">
    <property type="entry name" value="Na_H_Exchanger"/>
    <property type="match status" value="1"/>
</dbReference>
<dbReference type="PRINTS" id="PR01084">
    <property type="entry name" value="NAHEXCHNGR"/>
</dbReference>
<dbReference type="PRINTS" id="PR01088">
    <property type="entry name" value="NAHEXCHNGR6"/>
</dbReference>
<accession>D3ZJ86</accession>